<organism>
    <name type="scientific">Erythrobacter litoralis (strain HTCC2594)</name>
    <dbReference type="NCBI Taxonomy" id="314225"/>
    <lineage>
        <taxon>Bacteria</taxon>
        <taxon>Pseudomonadati</taxon>
        <taxon>Pseudomonadota</taxon>
        <taxon>Alphaproteobacteria</taxon>
        <taxon>Sphingomonadales</taxon>
        <taxon>Erythrobacteraceae</taxon>
        <taxon>Erythrobacter/Porphyrobacter group</taxon>
        <taxon>Erythrobacter</taxon>
    </lineage>
</organism>
<comment type="function">
    <text evidence="1">Catalyzes the hydrolysis of N-formyl-L-kynurenine to L-kynurenine, the second step in the kynurenine pathway of tryptophan degradation.</text>
</comment>
<comment type="catalytic activity">
    <reaction evidence="1">
        <text>N-formyl-L-kynurenine + H2O = L-kynurenine + formate + H(+)</text>
        <dbReference type="Rhea" id="RHEA:13009"/>
        <dbReference type="ChEBI" id="CHEBI:15377"/>
        <dbReference type="ChEBI" id="CHEBI:15378"/>
        <dbReference type="ChEBI" id="CHEBI:15740"/>
        <dbReference type="ChEBI" id="CHEBI:57959"/>
        <dbReference type="ChEBI" id="CHEBI:58629"/>
        <dbReference type="EC" id="3.5.1.9"/>
    </reaction>
</comment>
<comment type="cofactor">
    <cofactor evidence="1">
        <name>Zn(2+)</name>
        <dbReference type="ChEBI" id="CHEBI:29105"/>
    </cofactor>
    <text evidence="1">Binds 2 zinc ions per subunit.</text>
</comment>
<comment type="pathway">
    <text evidence="1">Amino-acid degradation; L-tryptophan degradation via kynurenine pathway; L-kynurenine from L-tryptophan: step 2/2.</text>
</comment>
<comment type="subunit">
    <text evidence="1">Homodimer.</text>
</comment>
<comment type="similarity">
    <text evidence="1">Belongs to the Cyclase 1 superfamily. KynB family.</text>
</comment>
<evidence type="ECO:0000255" key="1">
    <source>
        <dbReference type="HAMAP-Rule" id="MF_01969"/>
    </source>
</evidence>
<gene>
    <name evidence="1" type="primary">kynB</name>
    <name type="ordered locus">ELI_14145</name>
</gene>
<accession>Q2N5X0</accession>
<protein>
    <recommendedName>
        <fullName evidence="1">Kynurenine formamidase</fullName>
        <shortName evidence="1">KFA</shortName>
        <shortName evidence="1">KFase</shortName>
        <ecNumber evidence="1">3.5.1.9</ecNumber>
    </recommendedName>
    <alternativeName>
        <fullName evidence="1">Arylformamidase</fullName>
    </alternativeName>
    <alternativeName>
        <fullName evidence="1">N-formylkynurenine formamidase</fullName>
        <shortName evidence="1">FKF</shortName>
    </alternativeName>
</protein>
<sequence>MSSWKSQRRIWDISQTLRPGLPIWPGDTEFGFERTWRMDEGSPVNVGRMTMSTHSGTHGDAPLHYAEDGLDAASMELDSYIGECLVVDARGVSGEIDVADLPHIESADRVLFRQWDSFPHDEWRSDWLPIAAETVEWLALQGVKLIGTDAPSVDPQESKTMSAHKAVLKHDMRILEGLVLDDVPEGRYELLALPLKIVDGDAGLCRAILRELPDAG</sequence>
<name>KYNB_ERYLH</name>
<dbReference type="EC" id="3.5.1.9" evidence="1"/>
<dbReference type="EMBL" id="CP000157">
    <property type="protein sequence ID" value="ABC64921.1"/>
    <property type="molecule type" value="Genomic_DNA"/>
</dbReference>
<dbReference type="RefSeq" id="WP_011415743.1">
    <property type="nucleotide sequence ID" value="NC_007722.1"/>
</dbReference>
<dbReference type="SMR" id="Q2N5X0"/>
<dbReference type="STRING" id="314225.ELI_14145"/>
<dbReference type="KEGG" id="eli:ELI_14145"/>
<dbReference type="eggNOG" id="COG1878">
    <property type="taxonomic scope" value="Bacteria"/>
</dbReference>
<dbReference type="HOGENOM" id="CLU_030671_3_1_5"/>
<dbReference type="OrthoDB" id="9777007at2"/>
<dbReference type="UniPathway" id="UPA00333">
    <property type="reaction ID" value="UER00454"/>
</dbReference>
<dbReference type="Proteomes" id="UP000008808">
    <property type="component" value="Chromosome"/>
</dbReference>
<dbReference type="GO" id="GO:0004061">
    <property type="term" value="F:arylformamidase activity"/>
    <property type="evidence" value="ECO:0000250"/>
    <property type="project" value="UniProtKB"/>
</dbReference>
<dbReference type="GO" id="GO:0004328">
    <property type="term" value="F:formamidase activity"/>
    <property type="evidence" value="ECO:0007669"/>
    <property type="project" value="InterPro"/>
</dbReference>
<dbReference type="GO" id="GO:0008270">
    <property type="term" value="F:zinc ion binding"/>
    <property type="evidence" value="ECO:0007669"/>
    <property type="project" value="UniProtKB-UniRule"/>
</dbReference>
<dbReference type="GO" id="GO:0043420">
    <property type="term" value="P:anthranilate metabolic process"/>
    <property type="evidence" value="ECO:0000250"/>
    <property type="project" value="UniProtKB"/>
</dbReference>
<dbReference type="GO" id="GO:0019441">
    <property type="term" value="P:L-tryptophan catabolic process to kynurenine"/>
    <property type="evidence" value="ECO:0000250"/>
    <property type="project" value="UniProtKB"/>
</dbReference>
<dbReference type="FunFam" id="3.50.30.50:FF:000001">
    <property type="entry name" value="Kynurenine formamidase"/>
    <property type="match status" value="1"/>
</dbReference>
<dbReference type="Gene3D" id="3.50.30.50">
    <property type="entry name" value="Putative cyclase"/>
    <property type="match status" value="1"/>
</dbReference>
<dbReference type="HAMAP" id="MF_01969">
    <property type="entry name" value="KynB"/>
    <property type="match status" value="1"/>
</dbReference>
<dbReference type="InterPro" id="IPR007325">
    <property type="entry name" value="KFase/CYL"/>
</dbReference>
<dbReference type="InterPro" id="IPR037175">
    <property type="entry name" value="KFase_sf"/>
</dbReference>
<dbReference type="InterPro" id="IPR017484">
    <property type="entry name" value="Kynurenine_formamidase_bac"/>
</dbReference>
<dbReference type="NCBIfam" id="TIGR03035">
    <property type="entry name" value="trp_arylform"/>
    <property type="match status" value="1"/>
</dbReference>
<dbReference type="PANTHER" id="PTHR31118">
    <property type="entry name" value="CYCLASE-LIKE PROTEIN 2"/>
    <property type="match status" value="1"/>
</dbReference>
<dbReference type="PANTHER" id="PTHR31118:SF32">
    <property type="entry name" value="KYNURENINE FORMAMIDASE"/>
    <property type="match status" value="1"/>
</dbReference>
<dbReference type="Pfam" id="PF04199">
    <property type="entry name" value="Cyclase"/>
    <property type="match status" value="1"/>
</dbReference>
<dbReference type="SUPFAM" id="SSF102198">
    <property type="entry name" value="Putative cyclase"/>
    <property type="match status" value="1"/>
</dbReference>
<proteinExistence type="inferred from homology"/>
<feature type="chain" id="PRO_0000362123" description="Kynurenine formamidase">
    <location>
        <begin position="1"/>
        <end position="216"/>
    </location>
</feature>
<feature type="active site" description="Proton donor/acceptor" evidence="1">
    <location>
        <position position="64"/>
    </location>
</feature>
<feature type="binding site" evidence="1">
    <location>
        <position position="24"/>
    </location>
    <ligand>
        <name>substrate</name>
    </ligand>
</feature>
<feature type="binding site" evidence="1">
    <location>
        <position position="54"/>
    </location>
    <ligand>
        <name>Zn(2+)</name>
        <dbReference type="ChEBI" id="CHEBI:29105"/>
        <label>1</label>
    </ligand>
</feature>
<feature type="binding site" evidence="1">
    <location>
        <position position="58"/>
    </location>
    <ligand>
        <name>Zn(2+)</name>
        <dbReference type="ChEBI" id="CHEBI:29105"/>
        <label>1</label>
    </ligand>
</feature>
<feature type="binding site" evidence="1">
    <location>
        <position position="60"/>
    </location>
    <ligand>
        <name>Zn(2+)</name>
        <dbReference type="ChEBI" id="CHEBI:29105"/>
        <label>1</label>
    </ligand>
</feature>
<feature type="binding site" evidence="1">
    <location>
        <position position="60"/>
    </location>
    <ligand>
        <name>Zn(2+)</name>
        <dbReference type="ChEBI" id="CHEBI:29105"/>
        <label>2</label>
    </ligand>
</feature>
<feature type="binding site" evidence="1">
    <location>
        <position position="164"/>
    </location>
    <ligand>
        <name>Zn(2+)</name>
        <dbReference type="ChEBI" id="CHEBI:29105"/>
        <label>2</label>
    </ligand>
</feature>
<feature type="binding site" evidence="1">
    <location>
        <position position="176"/>
    </location>
    <ligand>
        <name>Zn(2+)</name>
        <dbReference type="ChEBI" id="CHEBI:29105"/>
        <label>1</label>
    </ligand>
</feature>
<feature type="binding site" evidence="1">
    <location>
        <position position="176"/>
    </location>
    <ligand>
        <name>Zn(2+)</name>
        <dbReference type="ChEBI" id="CHEBI:29105"/>
        <label>2</label>
    </ligand>
</feature>
<keyword id="KW-0378">Hydrolase</keyword>
<keyword id="KW-0479">Metal-binding</keyword>
<keyword id="KW-1185">Reference proteome</keyword>
<keyword id="KW-0823">Tryptophan catabolism</keyword>
<keyword id="KW-0862">Zinc</keyword>
<reference key="1">
    <citation type="journal article" date="2009" name="J. Bacteriol.">
        <title>Complete genome sequence of Erythrobacter litoralis HTCC2594.</title>
        <authorList>
            <person name="Oh H.M."/>
            <person name="Giovannoni S.J."/>
            <person name="Ferriera S."/>
            <person name="Johnson J."/>
            <person name="Cho J.C."/>
        </authorList>
    </citation>
    <scope>NUCLEOTIDE SEQUENCE [LARGE SCALE GENOMIC DNA]</scope>
    <source>
        <strain>HTCC2594</strain>
    </source>
</reference>